<feature type="chain" id="PRO_0000334382" description="Na(+)/H(+) antiporter NhaA">
    <location>
        <begin position="1"/>
        <end position="400"/>
    </location>
</feature>
<feature type="transmembrane region" description="Helical" evidence="1">
    <location>
        <begin position="10"/>
        <end position="30"/>
    </location>
</feature>
<feature type="transmembrane region" description="Helical" evidence="1">
    <location>
        <begin position="60"/>
        <end position="80"/>
    </location>
</feature>
<feature type="transmembrane region" description="Helical" evidence="1">
    <location>
        <begin position="95"/>
        <end position="115"/>
    </location>
</feature>
<feature type="transmembrane region" description="Helical" evidence="1">
    <location>
        <begin position="126"/>
        <end position="146"/>
    </location>
</feature>
<feature type="transmembrane region" description="Helical" evidence="1">
    <location>
        <begin position="155"/>
        <end position="175"/>
    </location>
</feature>
<feature type="transmembrane region" description="Helical" evidence="1">
    <location>
        <begin position="178"/>
        <end position="198"/>
    </location>
</feature>
<feature type="transmembrane region" description="Helical" evidence="1">
    <location>
        <begin position="218"/>
        <end position="238"/>
    </location>
</feature>
<feature type="transmembrane region" description="Helical" evidence="1">
    <location>
        <begin position="265"/>
        <end position="285"/>
    </location>
</feature>
<feature type="transmembrane region" description="Helical" evidence="1">
    <location>
        <begin position="295"/>
        <end position="315"/>
    </location>
</feature>
<feature type="transmembrane region" description="Helical" evidence="1">
    <location>
        <begin position="334"/>
        <end position="354"/>
    </location>
</feature>
<feature type="transmembrane region" description="Helical" evidence="1">
    <location>
        <begin position="364"/>
        <end position="384"/>
    </location>
</feature>
<accession>Q1Q8V3</accession>
<comment type="function">
    <text evidence="1">Na(+)/H(+) antiporter that extrudes sodium in exchange for external protons.</text>
</comment>
<comment type="catalytic activity">
    <reaction evidence="1">
        <text>Na(+)(in) + 2 H(+)(out) = Na(+)(out) + 2 H(+)(in)</text>
        <dbReference type="Rhea" id="RHEA:29251"/>
        <dbReference type="ChEBI" id="CHEBI:15378"/>
        <dbReference type="ChEBI" id="CHEBI:29101"/>
    </reaction>
    <physiologicalReaction direction="left-to-right" evidence="1">
        <dbReference type="Rhea" id="RHEA:29252"/>
    </physiologicalReaction>
</comment>
<comment type="subcellular location">
    <subcellularLocation>
        <location evidence="1">Cell inner membrane</location>
        <topology evidence="1">Multi-pass membrane protein</topology>
    </subcellularLocation>
</comment>
<comment type="similarity">
    <text evidence="1">Belongs to the NhaA Na(+)/H(+) (TC 2.A.33) antiporter family.</text>
</comment>
<keyword id="KW-0050">Antiport</keyword>
<keyword id="KW-0997">Cell inner membrane</keyword>
<keyword id="KW-1003">Cell membrane</keyword>
<keyword id="KW-0406">Ion transport</keyword>
<keyword id="KW-0472">Membrane</keyword>
<keyword id="KW-0915">Sodium</keyword>
<keyword id="KW-0739">Sodium transport</keyword>
<keyword id="KW-0812">Transmembrane</keyword>
<keyword id="KW-1133">Transmembrane helix</keyword>
<keyword id="KW-0813">Transport</keyword>
<dbReference type="EMBL" id="CP000323">
    <property type="protein sequence ID" value="ABE75900.1"/>
    <property type="molecule type" value="Genomic_DNA"/>
</dbReference>
<dbReference type="RefSeq" id="WP_011514438.1">
    <property type="nucleotide sequence ID" value="NC_007969.1"/>
</dbReference>
<dbReference type="SMR" id="Q1Q8V3"/>
<dbReference type="STRING" id="335284.Pcryo_2123"/>
<dbReference type="KEGG" id="pcr:Pcryo_2123"/>
<dbReference type="eggNOG" id="COG3004">
    <property type="taxonomic scope" value="Bacteria"/>
</dbReference>
<dbReference type="HOGENOM" id="CLU_015803_1_0_6"/>
<dbReference type="Proteomes" id="UP000002425">
    <property type="component" value="Chromosome"/>
</dbReference>
<dbReference type="GO" id="GO:0005886">
    <property type="term" value="C:plasma membrane"/>
    <property type="evidence" value="ECO:0007669"/>
    <property type="project" value="UniProtKB-SubCell"/>
</dbReference>
<dbReference type="GO" id="GO:0015385">
    <property type="term" value="F:sodium:proton antiporter activity"/>
    <property type="evidence" value="ECO:0007669"/>
    <property type="project" value="TreeGrafter"/>
</dbReference>
<dbReference type="GO" id="GO:0006885">
    <property type="term" value="P:regulation of pH"/>
    <property type="evidence" value="ECO:0007669"/>
    <property type="project" value="InterPro"/>
</dbReference>
<dbReference type="Gene3D" id="1.20.1530.10">
    <property type="entry name" value="Na+/H+ antiporter like domain"/>
    <property type="match status" value="1"/>
</dbReference>
<dbReference type="HAMAP" id="MF_01844">
    <property type="entry name" value="NhaA"/>
    <property type="match status" value="1"/>
</dbReference>
<dbReference type="InterPro" id="IPR023171">
    <property type="entry name" value="Na/H_antiporter_dom_sf"/>
</dbReference>
<dbReference type="InterPro" id="IPR004670">
    <property type="entry name" value="NhaA"/>
</dbReference>
<dbReference type="NCBIfam" id="TIGR00773">
    <property type="entry name" value="NhaA"/>
    <property type="match status" value="1"/>
</dbReference>
<dbReference type="NCBIfam" id="NF007111">
    <property type="entry name" value="PRK09560.1"/>
    <property type="match status" value="1"/>
</dbReference>
<dbReference type="NCBIfam" id="NF007112">
    <property type="entry name" value="PRK09561.1"/>
    <property type="match status" value="1"/>
</dbReference>
<dbReference type="PANTHER" id="PTHR30341:SF0">
    <property type="entry name" value="NA(+)_H(+) ANTIPORTER NHAA"/>
    <property type="match status" value="1"/>
</dbReference>
<dbReference type="PANTHER" id="PTHR30341">
    <property type="entry name" value="SODIUM ION/PROTON ANTIPORTER NHAA-RELATED"/>
    <property type="match status" value="1"/>
</dbReference>
<dbReference type="Pfam" id="PF06965">
    <property type="entry name" value="Na_H_antiport_1"/>
    <property type="match status" value="1"/>
</dbReference>
<sequence>MAIHKIRAFFNLEASGGIVLALAAIAAMIIANTSLNTWYESFIHAPVAIQIGSFSIAKDAHHWINDGLMAVFFFLVGLELKREVLIGELSNVKQIILPAGAALGGMIMPAIVYLFFNYNEPEFWRGWAIPAATDIAFALGILSLLGNRVPNSLKVFLVSIAIFDDIGAIIIIALFYTNDLSLGSLAIAGLCLPFLYLLNRRNVTSITPYLLIGVIMWVAVLKSGIHATLAGVVLALFIPLFDRTDPEHSPLEELEHDLQNTVSYGILPLFAFANAGISLKGAGFGELFHSVPLGIAAGLFIGKQVGVMLMCWLIFKLGISTMPKGMNFKQIYGAALLCGVGFTMSLFIGGLAFAGETPLFDERLGIIMGSIVSGIAGYMMLKATLKDEVNVTSVDLTRHS</sequence>
<proteinExistence type="inferred from homology"/>
<reference key="1">
    <citation type="submission" date="2006-03" db="EMBL/GenBank/DDBJ databases">
        <title>Complete sequence of chromosome of Psychrobacter cryohalolentis K5.</title>
        <authorList>
            <consortium name="US DOE Joint Genome Institute"/>
            <person name="Copeland A."/>
            <person name="Lucas S."/>
            <person name="Lapidus A."/>
            <person name="Barry K."/>
            <person name="Detter J.C."/>
            <person name="Glavina T."/>
            <person name="Hammon N."/>
            <person name="Israni S."/>
            <person name="Dalin E."/>
            <person name="Tice H."/>
            <person name="Pitluck S."/>
            <person name="Brettin T."/>
            <person name="Bruce D."/>
            <person name="Han C."/>
            <person name="Tapia R."/>
            <person name="Sims D.R."/>
            <person name="Gilna P."/>
            <person name="Schmutz J."/>
            <person name="Larimer F."/>
            <person name="Land M."/>
            <person name="Hauser L."/>
            <person name="Kyrpides N."/>
            <person name="Kim E."/>
            <person name="Richardson P."/>
        </authorList>
    </citation>
    <scope>NUCLEOTIDE SEQUENCE [LARGE SCALE GENOMIC DNA]</scope>
    <source>
        <strain>ATCC BAA-1226 / DSM 17306 / VKM B-2378 / K5</strain>
    </source>
</reference>
<protein>
    <recommendedName>
        <fullName evidence="1">Na(+)/H(+) antiporter NhaA</fullName>
    </recommendedName>
    <alternativeName>
        <fullName evidence="1">Sodium/proton antiporter NhaA</fullName>
    </alternativeName>
</protein>
<evidence type="ECO:0000255" key="1">
    <source>
        <dbReference type="HAMAP-Rule" id="MF_01844"/>
    </source>
</evidence>
<gene>
    <name evidence="1" type="primary">nhaA</name>
    <name type="ordered locus">Pcryo_2123</name>
</gene>
<organism>
    <name type="scientific">Psychrobacter cryohalolentis (strain ATCC BAA-1226 / DSM 17306 / VKM B-2378 / K5)</name>
    <dbReference type="NCBI Taxonomy" id="335284"/>
    <lineage>
        <taxon>Bacteria</taxon>
        <taxon>Pseudomonadati</taxon>
        <taxon>Pseudomonadota</taxon>
        <taxon>Gammaproteobacteria</taxon>
        <taxon>Moraxellales</taxon>
        <taxon>Moraxellaceae</taxon>
        <taxon>Psychrobacter</taxon>
    </lineage>
</organism>
<name>NHAA_PSYCK</name>